<dbReference type="EC" id="1.1.1.-" evidence="1"/>
<dbReference type="EMBL" id="CP000479">
    <property type="protein sequence ID" value="ABK65683.1"/>
    <property type="molecule type" value="Genomic_DNA"/>
</dbReference>
<dbReference type="RefSeq" id="WP_011726085.1">
    <property type="nucleotide sequence ID" value="NC_008595.1"/>
</dbReference>
<dbReference type="SMR" id="A0QL30"/>
<dbReference type="KEGG" id="mav:MAV_4483"/>
<dbReference type="HOGENOM" id="CLU_023205_0_1_11"/>
<dbReference type="Proteomes" id="UP000001574">
    <property type="component" value="Chromosome"/>
</dbReference>
<dbReference type="GO" id="GO:0004033">
    <property type="term" value="F:aldo-keto reductase (NADPH) activity"/>
    <property type="evidence" value="ECO:0007669"/>
    <property type="project" value="TreeGrafter"/>
</dbReference>
<dbReference type="FunFam" id="3.20.20.100:FF:000015">
    <property type="entry name" value="Oxidoreductase, aldo/keto reductase family"/>
    <property type="match status" value="1"/>
</dbReference>
<dbReference type="Gene3D" id="3.20.20.100">
    <property type="entry name" value="NADP-dependent oxidoreductase domain"/>
    <property type="match status" value="1"/>
</dbReference>
<dbReference type="InterPro" id="IPR020471">
    <property type="entry name" value="AKR"/>
</dbReference>
<dbReference type="InterPro" id="IPR018170">
    <property type="entry name" value="Aldo/ket_reductase_CS"/>
</dbReference>
<dbReference type="InterPro" id="IPR023210">
    <property type="entry name" value="NADP_OxRdtase_dom"/>
</dbReference>
<dbReference type="InterPro" id="IPR036812">
    <property type="entry name" value="NADP_OxRdtase_dom_sf"/>
</dbReference>
<dbReference type="PANTHER" id="PTHR43827">
    <property type="entry name" value="2,5-DIKETO-D-GLUCONIC ACID REDUCTASE"/>
    <property type="match status" value="1"/>
</dbReference>
<dbReference type="PANTHER" id="PTHR43827:SF3">
    <property type="entry name" value="NADP-DEPENDENT OXIDOREDUCTASE DOMAIN-CONTAINING PROTEIN"/>
    <property type="match status" value="1"/>
</dbReference>
<dbReference type="Pfam" id="PF00248">
    <property type="entry name" value="Aldo_ket_red"/>
    <property type="match status" value="1"/>
</dbReference>
<dbReference type="PIRSF" id="PIRSF000097">
    <property type="entry name" value="AKR"/>
    <property type="match status" value="1"/>
</dbReference>
<dbReference type="PRINTS" id="PR00069">
    <property type="entry name" value="ALDKETRDTASE"/>
</dbReference>
<dbReference type="SUPFAM" id="SSF51430">
    <property type="entry name" value="NAD(P)-linked oxidoreductase"/>
    <property type="match status" value="1"/>
</dbReference>
<dbReference type="PROSITE" id="PS00062">
    <property type="entry name" value="ALDOKETO_REDUCTASE_2"/>
    <property type="match status" value="1"/>
</dbReference>
<sequence>MTVIDEIYSSSSAIPTVALNDEAKMPVLGLGVAKLSDEETESSVLAALEAGCRLIDTAASYGNEAAVGRAIAASGIPREELFVTTKLGTSRQGFHSAQESCKESLDRLGLDYLDLYLIHWPAPKLGKYVESFEGMIEARERGHVRSIGVSNFTEDLLATVIEETDEVPAVNQVELHPRLNQAELRQVHAQHDVTTQSYSPLGVGRLIEEPTVTTIAAEYGRTPAQVLVRWNLQLDNVVVSRSSKPERVAENLDVFDFTLEPEHMEAIEGLHDGTRVLHDPMTFMGT</sequence>
<protein>
    <recommendedName>
        <fullName evidence="1">Aldo-keto reductase MAV_4483</fullName>
        <ecNumber evidence="1">1.1.1.-</ecNumber>
    </recommendedName>
</protein>
<keyword id="KW-0521">NADP</keyword>
<keyword id="KW-0560">Oxidoreductase</keyword>
<accession>A0QL30</accession>
<proteinExistence type="inferred from homology"/>
<feature type="chain" id="PRO_0000380731" description="Aldo-keto reductase MAV_4483">
    <location>
        <begin position="1"/>
        <end position="286"/>
    </location>
</feature>
<feature type="active site" description="Proton donor" evidence="2">
    <location>
        <position position="61"/>
    </location>
</feature>
<feature type="binding site" evidence="1">
    <location>
        <position position="201"/>
    </location>
    <ligand>
        <name>NADPH</name>
        <dbReference type="ChEBI" id="CHEBI:57783"/>
    </ligand>
</feature>
<feature type="binding site" evidence="1">
    <location>
        <position position="203"/>
    </location>
    <ligand>
        <name>NADPH</name>
        <dbReference type="ChEBI" id="CHEBI:57783"/>
    </ligand>
</feature>
<feature type="binding site" evidence="1">
    <location>
        <position position="239"/>
    </location>
    <ligand>
        <name>NADPH</name>
        <dbReference type="ChEBI" id="CHEBI:57783"/>
    </ligand>
</feature>
<feature type="binding site" evidence="1">
    <location>
        <position position="241"/>
    </location>
    <ligand>
        <name>NADPH</name>
        <dbReference type="ChEBI" id="CHEBI:57783"/>
    </ligand>
</feature>
<feature type="binding site" evidence="1">
    <location>
        <position position="242"/>
    </location>
    <ligand>
        <name>NADPH</name>
        <dbReference type="ChEBI" id="CHEBI:57783"/>
    </ligand>
</feature>
<feature type="binding site" evidence="1">
    <location>
        <position position="247"/>
    </location>
    <ligand>
        <name>NADPH</name>
        <dbReference type="ChEBI" id="CHEBI:57783"/>
    </ligand>
</feature>
<feature type="binding site" evidence="1">
    <location>
        <position position="251"/>
    </location>
    <ligand>
        <name>NADPH</name>
        <dbReference type="ChEBI" id="CHEBI:57783"/>
    </ligand>
</feature>
<reference key="1">
    <citation type="submission" date="2006-10" db="EMBL/GenBank/DDBJ databases">
        <authorList>
            <person name="Fleischmann R.D."/>
            <person name="Dodson R.J."/>
            <person name="Haft D.H."/>
            <person name="Merkel J.S."/>
            <person name="Nelson W.C."/>
            <person name="Fraser C.M."/>
        </authorList>
    </citation>
    <scope>NUCLEOTIDE SEQUENCE [LARGE SCALE GENOMIC DNA]</scope>
    <source>
        <strain>104</strain>
    </source>
</reference>
<name>Y4483_MYCA1</name>
<evidence type="ECO:0000250" key="1">
    <source>
        <dbReference type="UniProtKB" id="A0QV09"/>
    </source>
</evidence>
<evidence type="ECO:0000250" key="2">
    <source>
        <dbReference type="UniProtKB" id="P80874"/>
    </source>
</evidence>
<evidence type="ECO:0000305" key="3"/>
<organism>
    <name type="scientific">Mycobacterium avium (strain 104)</name>
    <dbReference type="NCBI Taxonomy" id="243243"/>
    <lineage>
        <taxon>Bacteria</taxon>
        <taxon>Bacillati</taxon>
        <taxon>Actinomycetota</taxon>
        <taxon>Actinomycetes</taxon>
        <taxon>Mycobacteriales</taxon>
        <taxon>Mycobacteriaceae</taxon>
        <taxon>Mycobacterium</taxon>
        <taxon>Mycobacterium avium complex (MAC)</taxon>
    </lineage>
</organism>
<comment type="similarity">
    <text evidence="3">Belongs to the aldo/keto reductase family.</text>
</comment>
<gene>
    <name type="ordered locus">MAV_4483</name>
</gene>